<dbReference type="EC" id="7.1.2.2" evidence="1"/>
<dbReference type="EMBL" id="AM180252">
    <property type="protein sequence ID" value="CAJ54458.1"/>
    <property type="molecule type" value="Genomic_DNA"/>
</dbReference>
<dbReference type="RefSeq" id="WP_011526488.1">
    <property type="nucleotide sequence ID" value="NC_008011.1"/>
</dbReference>
<dbReference type="SMR" id="Q1MRB8"/>
<dbReference type="STRING" id="363253.LI0403"/>
<dbReference type="KEGG" id="lip:LI0403"/>
<dbReference type="eggNOG" id="COG0055">
    <property type="taxonomic scope" value="Bacteria"/>
</dbReference>
<dbReference type="HOGENOM" id="CLU_022398_0_2_7"/>
<dbReference type="OrthoDB" id="9801639at2"/>
<dbReference type="Proteomes" id="UP000002430">
    <property type="component" value="Chromosome"/>
</dbReference>
<dbReference type="GO" id="GO:0005886">
    <property type="term" value="C:plasma membrane"/>
    <property type="evidence" value="ECO:0007669"/>
    <property type="project" value="UniProtKB-SubCell"/>
</dbReference>
<dbReference type="GO" id="GO:0045259">
    <property type="term" value="C:proton-transporting ATP synthase complex"/>
    <property type="evidence" value="ECO:0007669"/>
    <property type="project" value="UniProtKB-KW"/>
</dbReference>
<dbReference type="GO" id="GO:0005524">
    <property type="term" value="F:ATP binding"/>
    <property type="evidence" value="ECO:0007669"/>
    <property type="project" value="UniProtKB-UniRule"/>
</dbReference>
<dbReference type="GO" id="GO:0016887">
    <property type="term" value="F:ATP hydrolysis activity"/>
    <property type="evidence" value="ECO:0007669"/>
    <property type="project" value="InterPro"/>
</dbReference>
<dbReference type="GO" id="GO:0046933">
    <property type="term" value="F:proton-transporting ATP synthase activity, rotational mechanism"/>
    <property type="evidence" value="ECO:0007669"/>
    <property type="project" value="UniProtKB-UniRule"/>
</dbReference>
<dbReference type="CDD" id="cd18110">
    <property type="entry name" value="ATP-synt_F1_beta_C"/>
    <property type="match status" value="1"/>
</dbReference>
<dbReference type="CDD" id="cd18115">
    <property type="entry name" value="ATP-synt_F1_beta_N"/>
    <property type="match status" value="1"/>
</dbReference>
<dbReference type="CDD" id="cd01133">
    <property type="entry name" value="F1-ATPase_beta_CD"/>
    <property type="match status" value="1"/>
</dbReference>
<dbReference type="FunFam" id="1.10.1140.10:FF:000001">
    <property type="entry name" value="ATP synthase subunit beta"/>
    <property type="match status" value="1"/>
</dbReference>
<dbReference type="FunFam" id="2.40.10.170:FF:000005">
    <property type="entry name" value="ATP synthase subunit beta"/>
    <property type="match status" value="1"/>
</dbReference>
<dbReference type="FunFam" id="3.40.50.300:FF:000026">
    <property type="entry name" value="ATP synthase subunit beta"/>
    <property type="match status" value="1"/>
</dbReference>
<dbReference type="Gene3D" id="2.40.10.170">
    <property type="match status" value="1"/>
</dbReference>
<dbReference type="Gene3D" id="1.10.1140.10">
    <property type="entry name" value="Bovine Mitochondrial F1-atpase, Atp Synthase Beta Chain, Chain D, domain 3"/>
    <property type="match status" value="1"/>
</dbReference>
<dbReference type="Gene3D" id="3.40.50.300">
    <property type="entry name" value="P-loop containing nucleotide triphosphate hydrolases"/>
    <property type="match status" value="1"/>
</dbReference>
<dbReference type="HAMAP" id="MF_01347">
    <property type="entry name" value="ATP_synth_beta_bact"/>
    <property type="match status" value="1"/>
</dbReference>
<dbReference type="InterPro" id="IPR003593">
    <property type="entry name" value="AAA+_ATPase"/>
</dbReference>
<dbReference type="InterPro" id="IPR055190">
    <property type="entry name" value="ATP-synt_VA_C"/>
</dbReference>
<dbReference type="InterPro" id="IPR005722">
    <property type="entry name" value="ATP_synth_F1_bsu"/>
</dbReference>
<dbReference type="InterPro" id="IPR020003">
    <property type="entry name" value="ATPase_a/bsu_AS"/>
</dbReference>
<dbReference type="InterPro" id="IPR050053">
    <property type="entry name" value="ATPase_alpha/beta_chains"/>
</dbReference>
<dbReference type="InterPro" id="IPR004100">
    <property type="entry name" value="ATPase_F1/V1/A1_a/bsu_N"/>
</dbReference>
<dbReference type="InterPro" id="IPR036121">
    <property type="entry name" value="ATPase_F1/V1/A1_a/bsu_N_sf"/>
</dbReference>
<dbReference type="InterPro" id="IPR000194">
    <property type="entry name" value="ATPase_F1/V1/A1_a/bsu_nucl-bd"/>
</dbReference>
<dbReference type="InterPro" id="IPR024034">
    <property type="entry name" value="ATPase_F1/V1_b/a_C"/>
</dbReference>
<dbReference type="InterPro" id="IPR027417">
    <property type="entry name" value="P-loop_NTPase"/>
</dbReference>
<dbReference type="NCBIfam" id="TIGR01039">
    <property type="entry name" value="atpD"/>
    <property type="match status" value="1"/>
</dbReference>
<dbReference type="PANTHER" id="PTHR15184">
    <property type="entry name" value="ATP SYNTHASE"/>
    <property type="match status" value="1"/>
</dbReference>
<dbReference type="PANTHER" id="PTHR15184:SF71">
    <property type="entry name" value="ATP SYNTHASE SUBUNIT BETA, MITOCHONDRIAL"/>
    <property type="match status" value="1"/>
</dbReference>
<dbReference type="Pfam" id="PF00006">
    <property type="entry name" value="ATP-synt_ab"/>
    <property type="match status" value="1"/>
</dbReference>
<dbReference type="Pfam" id="PF02874">
    <property type="entry name" value="ATP-synt_ab_N"/>
    <property type="match status" value="1"/>
</dbReference>
<dbReference type="Pfam" id="PF22919">
    <property type="entry name" value="ATP-synt_VA_C"/>
    <property type="match status" value="1"/>
</dbReference>
<dbReference type="SMART" id="SM00382">
    <property type="entry name" value="AAA"/>
    <property type="match status" value="1"/>
</dbReference>
<dbReference type="SUPFAM" id="SSF47917">
    <property type="entry name" value="C-terminal domain of alpha and beta subunits of F1 ATP synthase"/>
    <property type="match status" value="1"/>
</dbReference>
<dbReference type="SUPFAM" id="SSF50615">
    <property type="entry name" value="N-terminal domain of alpha and beta subunits of F1 ATP synthase"/>
    <property type="match status" value="1"/>
</dbReference>
<dbReference type="SUPFAM" id="SSF52540">
    <property type="entry name" value="P-loop containing nucleoside triphosphate hydrolases"/>
    <property type="match status" value="1"/>
</dbReference>
<dbReference type="PROSITE" id="PS00152">
    <property type="entry name" value="ATPASE_ALPHA_BETA"/>
    <property type="match status" value="1"/>
</dbReference>
<comment type="function">
    <text evidence="1">Produces ATP from ADP in the presence of a proton gradient across the membrane. The catalytic sites are hosted primarily by the beta subunits.</text>
</comment>
<comment type="catalytic activity">
    <reaction evidence="1">
        <text>ATP + H2O + 4 H(+)(in) = ADP + phosphate + 5 H(+)(out)</text>
        <dbReference type="Rhea" id="RHEA:57720"/>
        <dbReference type="ChEBI" id="CHEBI:15377"/>
        <dbReference type="ChEBI" id="CHEBI:15378"/>
        <dbReference type="ChEBI" id="CHEBI:30616"/>
        <dbReference type="ChEBI" id="CHEBI:43474"/>
        <dbReference type="ChEBI" id="CHEBI:456216"/>
        <dbReference type="EC" id="7.1.2.2"/>
    </reaction>
</comment>
<comment type="subunit">
    <text evidence="1">F-type ATPases have 2 components, CF(1) - the catalytic core - and CF(0) - the membrane proton channel. CF(1) has five subunits: alpha(3), beta(3), gamma(1), delta(1), epsilon(1). CF(0) has three main subunits: a(1), b(2) and c(9-12). The alpha and beta chains form an alternating ring which encloses part of the gamma chain. CF(1) is attached to CF(0) by a central stalk formed by the gamma and epsilon chains, while a peripheral stalk is formed by the delta and b chains.</text>
</comment>
<comment type="subcellular location">
    <subcellularLocation>
        <location evidence="1">Cell membrane</location>
        <topology evidence="1">Peripheral membrane protein</topology>
    </subcellularLocation>
</comment>
<comment type="similarity">
    <text evidence="1">Belongs to the ATPase alpha/beta chains family.</text>
</comment>
<reference key="1">
    <citation type="submission" date="2005-11" db="EMBL/GenBank/DDBJ databases">
        <title>The complete genome sequence of Lawsonia intracellularis: the causative agent of proliferative enteropathy.</title>
        <authorList>
            <person name="Kaur K."/>
            <person name="Zhang Q."/>
            <person name="Beckler D."/>
            <person name="Munir S."/>
            <person name="Li L."/>
            <person name="Kinsley K."/>
            <person name="Herron L."/>
            <person name="Peterson A."/>
            <person name="May B."/>
            <person name="Singh S."/>
            <person name="Gebhart C."/>
            <person name="Kapur V."/>
        </authorList>
    </citation>
    <scope>NUCLEOTIDE SEQUENCE [LARGE SCALE GENOMIC DNA]</scope>
    <source>
        <strain>PHE/MN1-00</strain>
    </source>
</reference>
<feature type="chain" id="PRO_0000254284" description="ATP synthase subunit beta">
    <location>
        <begin position="1"/>
        <end position="471"/>
    </location>
</feature>
<feature type="binding site" evidence="1">
    <location>
        <begin position="156"/>
        <end position="163"/>
    </location>
    <ligand>
        <name>ATP</name>
        <dbReference type="ChEBI" id="CHEBI:30616"/>
    </ligand>
</feature>
<name>ATPB_LAWIP</name>
<gene>
    <name evidence="1" type="primary">atpD</name>
    <name type="ordered locus">LI0403</name>
</gene>
<accession>Q1MRB8</accession>
<proteinExistence type="inferred from homology"/>
<sequence length="471" mass="51207">MSENIGKIVQVIGAVVDVSFPNGKLPPILTALEIHNPNSIDAPKLICEVAQHLGDDIVRTIAMDATEGLKRGMDVLDTGHPIMAPVGKASLGRIMNVVGQPIDGLGVIDTKTYLPIHRKPPSFLDQNTSVEPLETGIKVIDLLVPFPKGGKMGLFGGAGVGKTVILMEMINNIARQHGGISVFAGVGERTREGNDLYHEMKEAGVLEKAILVYGQMNEPPGARSRVALTALTCAEYFRDEEHQDVLLFIDNIFRFIQAGSEVSALLGRMPSAVGYQPTLGTDLGSLEERITSTHNGSITSVQAVYVPADDLTDPAPATTFSHLDGTLVLSRQIAELGIYPAVDPLDSTSRILEPNFVGEEHYTVARGVQKILQKYKELQDIIAILGMDELSDEDKLVVSRARRIQRFLSQPFHVAETFTGTAGEYVKLEDTIKGFKGILAGEYDHLSESDFYMVGNIDSAVAKYEKRKESK</sequence>
<organism>
    <name type="scientific">Lawsonia intracellularis (strain PHE/MN1-00)</name>
    <dbReference type="NCBI Taxonomy" id="363253"/>
    <lineage>
        <taxon>Bacteria</taxon>
        <taxon>Pseudomonadati</taxon>
        <taxon>Thermodesulfobacteriota</taxon>
        <taxon>Desulfovibrionia</taxon>
        <taxon>Desulfovibrionales</taxon>
        <taxon>Desulfovibrionaceae</taxon>
        <taxon>Lawsonia</taxon>
    </lineage>
</organism>
<evidence type="ECO:0000255" key="1">
    <source>
        <dbReference type="HAMAP-Rule" id="MF_01347"/>
    </source>
</evidence>
<protein>
    <recommendedName>
        <fullName evidence="1">ATP synthase subunit beta</fullName>
        <ecNumber evidence="1">7.1.2.2</ecNumber>
    </recommendedName>
    <alternativeName>
        <fullName evidence="1">ATP synthase F1 sector subunit beta</fullName>
    </alternativeName>
    <alternativeName>
        <fullName evidence="1">F-ATPase subunit beta</fullName>
    </alternativeName>
</protein>
<keyword id="KW-0066">ATP synthesis</keyword>
<keyword id="KW-0067">ATP-binding</keyword>
<keyword id="KW-1003">Cell membrane</keyword>
<keyword id="KW-0139">CF(1)</keyword>
<keyword id="KW-0375">Hydrogen ion transport</keyword>
<keyword id="KW-0406">Ion transport</keyword>
<keyword id="KW-0472">Membrane</keyword>
<keyword id="KW-0547">Nucleotide-binding</keyword>
<keyword id="KW-1185">Reference proteome</keyword>
<keyword id="KW-1278">Translocase</keyword>
<keyword id="KW-0813">Transport</keyword>